<comment type="function">
    <text evidence="1">Cleaves both 3' and 5' ssDNA extremities of branched DNA structures.</text>
</comment>
<comment type="subcellular location">
    <subcellularLocation>
        <location evidence="1">Cytoplasm</location>
    </subcellularLocation>
</comment>
<comment type="similarity">
    <text evidence="1">Belongs to the NucS endonuclease family.</text>
</comment>
<protein>
    <recommendedName>
        <fullName evidence="1">Endonuclease NucS</fullName>
        <ecNumber evidence="1">3.1.-.-</ecNumber>
    </recommendedName>
</protein>
<organism>
    <name type="scientific">Corynebacterium kroppenstedtii (strain DSM 44385 / JCM 11950 / CIP 105744 / CCUG 35717)</name>
    <dbReference type="NCBI Taxonomy" id="645127"/>
    <lineage>
        <taxon>Bacteria</taxon>
        <taxon>Bacillati</taxon>
        <taxon>Actinomycetota</taxon>
        <taxon>Actinomycetes</taxon>
        <taxon>Mycobacteriales</taxon>
        <taxon>Corynebacteriaceae</taxon>
        <taxon>Corynebacterium</taxon>
    </lineage>
</organism>
<name>NUCS_CORK4</name>
<proteinExistence type="inferred from homology"/>
<gene>
    <name evidence="1" type="primary">nucS</name>
    <name type="ordered locus">ckrop_1272</name>
</gene>
<accession>C4LJL1</accession>
<sequence>MRLVIATCSVDYVGRLTAHLPKATRLLMVKADGSVSVHADDRAYKPLNWMTPPCTLTVHPIAIDDPDTDFTDGSSVGNSEEQGTDGSAHTAHEEELWVVENKKGEQLRITVHDKISDTTYDLGEDPGLTKDGVEAHLQELLAQHPEALGEGFTLVRREYPTPIGPVDILTRDASGKTVAVEVKRRGGIDGVEQLTRYVELLNRDEILAPVQGLFAAQEIKPQARTLAEDRGFTCVTVDYDELRGTPSQELRLF</sequence>
<reference key="1">
    <citation type="journal article" date="2008" name="J. Biotechnol.">
        <title>Ultrafast pyrosequencing of Corynebacterium kroppenstedtii DSM44385 revealed insights into the physiology of a lipophilic corynebacterium that lacks mycolic acids.</title>
        <authorList>
            <person name="Tauch A."/>
            <person name="Schneider J."/>
            <person name="Szczepanowski R."/>
            <person name="Tilker A."/>
            <person name="Viehoever P."/>
            <person name="Gartemann K.-H."/>
            <person name="Arnold W."/>
            <person name="Blom J."/>
            <person name="Brinkrolf K."/>
            <person name="Brune I."/>
            <person name="Goetker S."/>
            <person name="Weisshaar B."/>
            <person name="Goesmann A."/>
            <person name="Droege M."/>
            <person name="Puehler A."/>
        </authorList>
    </citation>
    <scope>NUCLEOTIDE SEQUENCE [LARGE SCALE GENOMIC DNA]</scope>
    <source>
        <strain>DSM 44385 / JCM 11950 / CIP 105744 / CCUG 35717</strain>
    </source>
</reference>
<evidence type="ECO:0000255" key="1">
    <source>
        <dbReference type="HAMAP-Rule" id="MF_00722"/>
    </source>
</evidence>
<evidence type="ECO:0000256" key="2">
    <source>
        <dbReference type="SAM" id="MobiDB-lite"/>
    </source>
</evidence>
<feature type="chain" id="PRO_1000212714" description="Endonuclease NucS">
    <location>
        <begin position="1"/>
        <end position="253"/>
    </location>
</feature>
<feature type="region of interest" description="Disordered" evidence="2">
    <location>
        <begin position="63"/>
        <end position="91"/>
    </location>
</feature>
<feature type="compositionally biased region" description="Polar residues" evidence="2">
    <location>
        <begin position="71"/>
        <end position="87"/>
    </location>
</feature>
<keyword id="KW-0963">Cytoplasm</keyword>
<keyword id="KW-0238">DNA-binding</keyword>
<keyword id="KW-0255">Endonuclease</keyword>
<keyword id="KW-0378">Hydrolase</keyword>
<keyword id="KW-0540">Nuclease</keyword>
<keyword id="KW-1185">Reference proteome</keyword>
<dbReference type="EC" id="3.1.-.-" evidence="1"/>
<dbReference type="EMBL" id="CP001620">
    <property type="protein sequence ID" value="ACR18016.1"/>
    <property type="molecule type" value="Genomic_DNA"/>
</dbReference>
<dbReference type="RefSeq" id="WP_012731903.1">
    <property type="nucleotide sequence ID" value="NC_012704.1"/>
</dbReference>
<dbReference type="SMR" id="C4LJL1"/>
<dbReference type="STRING" id="645127.ckrop_1272"/>
<dbReference type="KEGG" id="ckp:ckrop_1272"/>
<dbReference type="eggNOG" id="COG1637">
    <property type="taxonomic scope" value="Bacteria"/>
</dbReference>
<dbReference type="HOGENOM" id="CLU_069350_0_0_11"/>
<dbReference type="OrthoDB" id="3344925at2"/>
<dbReference type="Proteomes" id="UP000001473">
    <property type="component" value="Chromosome"/>
</dbReference>
<dbReference type="GO" id="GO:0005737">
    <property type="term" value="C:cytoplasm"/>
    <property type="evidence" value="ECO:0007669"/>
    <property type="project" value="UniProtKB-SubCell"/>
</dbReference>
<dbReference type="GO" id="GO:0003677">
    <property type="term" value="F:DNA binding"/>
    <property type="evidence" value="ECO:0007669"/>
    <property type="project" value="UniProtKB-KW"/>
</dbReference>
<dbReference type="GO" id="GO:0000014">
    <property type="term" value="F:single-stranded DNA endodeoxyribonuclease activity"/>
    <property type="evidence" value="ECO:0007669"/>
    <property type="project" value="UniProtKB-UniRule"/>
</dbReference>
<dbReference type="CDD" id="cd22341">
    <property type="entry name" value="NucS-like"/>
    <property type="match status" value="1"/>
</dbReference>
<dbReference type="Gene3D" id="2.70.180.20">
    <property type="match status" value="1"/>
</dbReference>
<dbReference type="Gene3D" id="3.40.1350.10">
    <property type="match status" value="1"/>
</dbReference>
<dbReference type="HAMAP" id="MF_00722">
    <property type="entry name" value="NucS"/>
    <property type="match status" value="1"/>
</dbReference>
<dbReference type="InterPro" id="IPR002793">
    <property type="entry name" value="Endonuclease_NucS"/>
</dbReference>
<dbReference type="InterPro" id="IPR048301">
    <property type="entry name" value="NucS_C"/>
</dbReference>
<dbReference type="InterPro" id="IPR048302">
    <property type="entry name" value="NucS_N"/>
</dbReference>
<dbReference type="InterPro" id="IPR049173">
    <property type="entry name" value="NucS_N_sf"/>
</dbReference>
<dbReference type="InterPro" id="IPR011856">
    <property type="entry name" value="tRNA_endonuc-like_dom_sf"/>
</dbReference>
<dbReference type="NCBIfam" id="NF002876">
    <property type="entry name" value="PRK03298.1"/>
    <property type="match status" value="1"/>
</dbReference>
<dbReference type="PANTHER" id="PTHR38814">
    <property type="entry name" value="ENDONUCLEASE NUCS"/>
    <property type="match status" value="1"/>
</dbReference>
<dbReference type="PANTHER" id="PTHR38814:SF1">
    <property type="entry name" value="ENDONUCLEASE NUCS"/>
    <property type="match status" value="1"/>
</dbReference>
<dbReference type="Pfam" id="PF01939">
    <property type="entry name" value="NucS_C"/>
    <property type="match status" value="1"/>
</dbReference>
<dbReference type="Pfam" id="PF21003">
    <property type="entry name" value="NucS_N"/>
    <property type="match status" value="1"/>
</dbReference>